<evidence type="ECO:0000255" key="1">
    <source>
        <dbReference type="HAMAP-Rule" id="MF_00168"/>
    </source>
</evidence>
<reference key="1">
    <citation type="journal article" date="2006" name="Proc. Natl. Acad. Sci. U.S.A.">
        <title>Molecular genetic anatomy of inter- and intraserotype variation in the human bacterial pathogen group A Streptococcus.</title>
        <authorList>
            <person name="Beres S.B."/>
            <person name="Richter E.W."/>
            <person name="Nagiec M.J."/>
            <person name="Sumby P."/>
            <person name="Porcella S.F."/>
            <person name="DeLeo F.R."/>
            <person name="Musser J.M."/>
        </authorList>
    </citation>
    <scope>NUCLEOTIDE SEQUENCE [LARGE SCALE GENOMIC DNA]</scope>
    <source>
        <strain>MGAS9429</strain>
    </source>
</reference>
<dbReference type="EC" id="2.4.2.29" evidence="1"/>
<dbReference type="EMBL" id="CP000259">
    <property type="protein sequence ID" value="ABF31365.1"/>
    <property type="molecule type" value="Genomic_DNA"/>
</dbReference>
<dbReference type="RefSeq" id="WP_002986319.1">
    <property type="nucleotide sequence ID" value="NC_008021.1"/>
</dbReference>
<dbReference type="SMR" id="Q1JNN4"/>
<dbReference type="GeneID" id="69900150"/>
<dbReference type="KEGG" id="spk:MGAS9429_Spy0177"/>
<dbReference type="HOGENOM" id="CLU_022060_0_1_9"/>
<dbReference type="UniPathway" id="UPA00392"/>
<dbReference type="Proteomes" id="UP000002433">
    <property type="component" value="Chromosome"/>
</dbReference>
<dbReference type="GO" id="GO:0005829">
    <property type="term" value="C:cytosol"/>
    <property type="evidence" value="ECO:0007669"/>
    <property type="project" value="TreeGrafter"/>
</dbReference>
<dbReference type="GO" id="GO:0046872">
    <property type="term" value="F:metal ion binding"/>
    <property type="evidence" value="ECO:0007669"/>
    <property type="project" value="UniProtKB-KW"/>
</dbReference>
<dbReference type="GO" id="GO:0008479">
    <property type="term" value="F:tRNA-guanosine(34) queuine transglycosylase activity"/>
    <property type="evidence" value="ECO:0007669"/>
    <property type="project" value="UniProtKB-UniRule"/>
</dbReference>
<dbReference type="GO" id="GO:0008616">
    <property type="term" value="P:queuosine biosynthetic process"/>
    <property type="evidence" value="ECO:0007669"/>
    <property type="project" value="UniProtKB-UniRule"/>
</dbReference>
<dbReference type="GO" id="GO:0002099">
    <property type="term" value="P:tRNA wobble guanine modification"/>
    <property type="evidence" value="ECO:0007669"/>
    <property type="project" value="TreeGrafter"/>
</dbReference>
<dbReference type="GO" id="GO:0101030">
    <property type="term" value="P:tRNA-guanine transglycosylation"/>
    <property type="evidence" value="ECO:0007669"/>
    <property type="project" value="InterPro"/>
</dbReference>
<dbReference type="FunFam" id="3.20.20.105:FF:000001">
    <property type="entry name" value="Queuine tRNA-ribosyltransferase"/>
    <property type="match status" value="1"/>
</dbReference>
<dbReference type="Gene3D" id="3.20.20.105">
    <property type="entry name" value="Queuine tRNA-ribosyltransferase-like"/>
    <property type="match status" value="1"/>
</dbReference>
<dbReference type="HAMAP" id="MF_00168">
    <property type="entry name" value="Q_tRNA_Tgt"/>
    <property type="match status" value="1"/>
</dbReference>
<dbReference type="InterPro" id="IPR050076">
    <property type="entry name" value="ArchSynthase1/Queuine_TRR"/>
</dbReference>
<dbReference type="InterPro" id="IPR004803">
    <property type="entry name" value="TGT"/>
</dbReference>
<dbReference type="InterPro" id="IPR036511">
    <property type="entry name" value="TGT-like_sf"/>
</dbReference>
<dbReference type="InterPro" id="IPR002616">
    <property type="entry name" value="tRNA_ribo_trans-like"/>
</dbReference>
<dbReference type="NCBIfam" id="TIGR00430">
    <property type="entry name" value="Q_tRNA_tgt"/>
    <property type="match status" value="1"/>
</dbReference>
<dbReference type="NCBIfam" id="TIGR00449">
    <property type="entry name" value="tgt_general"/>
    <property type="match status" value="1"/>
</dbReference>
<dbReference type="PANTHER" id="PTHR46499">
    <property type="entry name" value="QUEUINE TRNA-RIBOSYLTRANSFERASE"/>
    <property type="match status" value="1"/>
</dbReference>
<dbReference type="PANTHER" id="PTHR46499:SF1">
    <property type="entry name" value="QUEUINE TRNA-RIBOSYLTRANSFERASE"/>
    <property type="match status" value="1"/>
</dbReference>
<dbReference type="Pfam" id="PF01702">
    <property type="entry name" value="TGT"/>
    <property type="match status" value="1"/>
</dbReference>
<dbReference type="SUPFAM" id="SSF51713">
    <property type="entry name" value="tRNA-guanine transglycosylase"/>
    <property type="match status" value="1"/>
</dbReference>
<keyword id="KW-0328">Glycosyltransferase</keyword>
<keyword id="KW-0479">Metal-binding</keyword>
<keyword id="KW-0671">Queuosine biosynthesis</keyword>
<keyword id="KW-0808">Transferase</keyword>
<keyword id="KW-0819">tRNA processing</keyword>
<keyword id="KW-0862">Zinc</keyword>
<comment type="function">
    <text evidence="1">Catalyzes the base-exchange of a guanine (G) residue with the queuine precursor 7-aminomethyl-7-deazaguanine (PreQ1) at position 34 (anticodon wobble position) in tRNAs with GU(N) anticodons (tRNA-Asp, -Asn, -His and -Tyr). Catalysis occurs through a double-displacement mechanism. The nucleophile active site attacks the C1' of nucleotide 34 to detach the guanine base from the RNA, forming a covalent enzyme-RNA intermediate. The proton acceptor active site deprotonates the incoming PreQ1, allowing a nucleophilic attack on the C1' of the ribose to form the product. After dissociation, two additional enzymatic reactions on the tRNA convert PreQ1 to queuine (Q), resulting in the hypermodified nucleoside queuosine (7-(((4,5-cis-dihydroxy-2-cyclopenten-1-yl)amino)methyl)-7-deazaguanosine).</text>
</comment>
<comment type="catalytic activity">
    <reaction evidence="1">
        <text>7-aminomethyl-7-carbaguanine + guanosine(34) in tRNA = 7-aminomethyl-7-carbaguanosine(34) in tRNA + guanine</text>
        <dbReference type="Rhea" id="RHEA:24104"/>
        <dbReference type="Rhea" id="RHEA-COMP:10341"/>
        <dbReference type="Rhea" id="RHEA-COMP:10342"/>
        <dbReference type="ChEBI" id="CHEBI:16235"/>
        <dbReference type="ChEBI" id="CHEBI:58703"/>
        <dbReference type="ChEBI" id="CHEBI:74269"/>
        <dbReference type="ChEBI" id="CHEBI:82833"/>
        <dbReference type="EC" id="2.4.2.29"/>
    </reaction>
</comment>
<comment type="cofactor">
    <cofactor evidence="1">
        <name>Zn(2+)</name>
        <dbReference type="ChEBI" id="CHEBI:29105"/>
    </cofactor>
    <text evidence="1">Binds 1 zinc ion per subunit.</text>
</comment>
<comment type="pathway">
    <text evidence="1">tRNA modification; tRNA-queuosine biosynthesis.</text>
</comment>
<comment type="subunit">
    <text evidence="1">Homodimer. Within each dimer, one monomer is responsible for RNA recognition and catalysis, while the other monomer binds to the replacement base PreQ1.</text>
</comment>
<comment type="similarity">
    <text evidence="1">Belongs to the queuine tRNA-ribosyltransferase family.</text>
</comment>
<protein>
    <recommendedName>
        <fullName evidence="1">Queuine tRNA-ribosyltransferase</fullName>
        <ecNumber evidence="1">2.4.2.29</ecNumber>
    </recommendedName>
    <alternativeName>
        <fullName evidence="1">Guanine insertion enzyme</fullName>
    </alternativeName>
    <alternativeName>
        <fullName evidence="1">tRNA-guanine transglycosylase</fullName>
    </alternativeName>
</protein>
<sequence length="380" mass="43084">MTDYPIKYRLIKTEKHTGARLGEIITPHGTFPTPMFMPVGTQATVKTQSPEELKAIGSGIILSNTYHLWLRPGDELIARSGGLHKFMNWDQPILTDSGGFQVYSLADSRNITEEGVTFKNHLNGSKMFLSPEKAISIQNNLGSDIMMSFDECPQFYQPYDYVKKSIERTSRWAERGLKAHRRPHDQGLFGIVQGAGFEDLRRQSAADLVAMDFPGYSIGGLAVGESHEEMNAVLDFTTPLLPENKPRYLMGVGAPDSLIDGVIRGVDMFDCVLPTRIARNGTCMTSEGRLVIKNAKFAEDFTPLDHDCDCYTCQNYSRAYIRHLLKADETFGIRLTSYHNLYFLVNLMKKVRQAIMDDNLLEFRQDFLERYGYNKSNRNF</sequence>
<accession>Q1JNN4</accession>
<proteinExistence type="inferred from homology"/>
<gene>
    <name evidence="1" type="primary">tgt</name>
    <name type="ordered locus">MGAS9429_Spy0177</name>
</gene>
<feature type="chain" id="PRO_1000016869" description="Queuine tRNA-ribosyltransferase">
    <location>
        <begin position="1"/>
        <end position="380"/>
    </location>
</feature>
<feature type="region of interest" description="RNA binding" evidence="1">
    <location>
        <begin position="251"/>
        <end position="257"/>
    </location>
</feature>
<feature type="region of interest" description="RNA binding; important for wobble base 34 recognition" evidence="1">
    <location>
        <begin position="275"/>
        <end position="279"/>
    </location>
</feature>
<feature type="active site" description="Proton acceptor" evidence="1">
    <location>
        <position position="96"/>
    </location>
</feature>
<feature type="active site" description="Nucleophile" evidence="1">
    <location>
        <position position="270"/>
    </location>
</feature>
<feature type="binding site" evidence="1">
    <location>
        <begin position="96"/>
        <end position="100"/>
    </location>
    <ligand>
        <name>substrate</name>
    </ligand>
</feature>
<feature type="binding site" evidence="1">
    <location>
        <position position="150"/>
    </location>
    <ligand>
        <name>substrate</name>
    </ligand>
</feature>
<feature type="binding site" evidence="1">
    <location>
        <position position="193"/>
    </location>
    <ligand>
        <name>substrate</name>
    </ligand>
</feature>
<feature type="binding site" evidence="1">
    <location>
        <position position="220"/>
    </location>
    <ligand>
        <name>substrate</name>
    </ligand>
</feature>
<feature type="binding site" evidence="1">
    <location>
        <position position="308"/>
    </location>
    <ligand>
        <name>Zn(2+)</name>
        <dbReference type="ChEBI" id="CHEBI:29105"/>
    </ligand>
</feature>
<feature type="binding site" evidence="1">
    <location>
        <position position="310"/>
    </location>
    <ligand>
        <name>Zn(2+)</name>
        <dbReference type="ChEBI" id="CHEBI:29105"/>
    </ligand>
</feature>
<feature type="binding site" evidence="1">
    <location>
        <position position="313"/>
    </location>
    <ligand>
        <name>Zn(2+)</name>
        <dbReference type="ChEBI" id="CHEBI:29105"/>
    </ligand>
</feature>
<feature type="binding site" evidence="1">
    <location>
        <position position="339"/>
    </location>
    <ligand>
        <name>Zn(2+)</name>
        <dbReference type="ChEBI" id="CHEBI:29105"/>
    </ligand>
</feature>
<name>TGT_STRPC</name>
<organism>
    <name type="scientific">Streptococcus pyogenes serotype M12 (strain MGAS9429)</name>
    <dbReference type="NCBI Taxonomy" id="370551"/>
    <lineage>
        <taxon>Bacteria</taxon>
        <taxon>Bacillati</taxon>
        <taxon>Bacillota</taxon>
        <taxon>Bacilli</taxon>
        <taxon>Lactobacillales</taxon>
        <taxon>Streptococcaceae</taxon>
        <taxon>Streptococcus</taxon>
    </lineage>
</organism>